<feature type="chain" id="PRO_1000140942" description="Small ribosomal subunit protein uS3">
    <location>
        <begin position="1"/>
        <end position="221"/>
    </location>
</feature>
<feature type="domain" description="KH type-2" evidence="1">
    <location>
        <begin position="39"/>
        <end position="108"/>
    </location>
</feature>
<accession>B2UYB6</accession>
<keyword id="KW-0687">Ribonucleoprotein</keyword>
<keyword id="KW-0689">Ribosomal protein</keyword>
<keyword id="KW-0694">RNA-binding</keyword>
<keyword id="KW-0699">rRNA-binding</keyword>
<reference key="1">
    <citation type="submission" date="2008-05" db="EMBL/GenBank/DDBJ databases">
        <title>Complete genome sequence of Clostridium botulinum E3 str. Alaska E43.</title>
        <authorList>
            <person name="Brinkac L.M."/>
            <person name="Brown J.L."/>
            <person name="Bruce D."/>
            <person name="Detter C."/>
            <person name="Munk C."/>
            <person name="Smith L.A."/>
            <person name="Smith T.J."/>
            <person name="Sutton G."/>
            <person name="Brettin T.S."/>
        </authorList>
    </citation>
    <scope>NUCLEOTIDE SEQUENCE [LARGE SCALE GENOMIC DNA]</scope>
    <source>
        <strain>Alaska E43 / Type E3</strain>
    </source>
</reference>
<organism>
    <name type="scientific">Clostridium botulinum (strain Alaska E43 / Type E3)</name>
    <dbReference type="NCBI Taxonomy" id="508767"/>
    <lineage>
        <taxon>Bacteria</taxon>
        <taxon>Bacillati</taxon>
        <taxon>Bacillota</taxon>
        <taxon>Clostridia</taxon>
        <taxon>Eubacteriales</taxon>
        <taxon>Clostridiaceae</taxon>
        <taxon>Clostridium</taxon>
    </lineage>
</organism>
<evidence type="ECO:0000255" key="1">
    <source>
        <dbReference type="HAMAP-Rule" id="MF_01309"/>
    </source>
</evidence>
<evidence type="ECO:0000305" key="2"/>
<gene>
    <name evidence="1" type="primary">rpsC</name>
    <name type="ordered locus">CLH_0243</name>
</gene>
<name>RS3_CLOBA</name>
<proteinExistence type="inferred from homology"/>
<dbReference type="EMBL" id="CP001078">
    <property type="protein sequence ID" value="ACD52203.1"/>
    <property type="molecule type" value="Genomic_DNA"/>
</dbReference>
<dbReference type="RefSeq" id="WP_003372227.1">
    <property type="nucleotide sequence ID" value="NC_010723.1"/>
</dbReference>
<dbReference type="SMR" id="B2UYB6"/>
<dbReference type="KEGG" id="cbt:CLH_0243"/>
<dbReference type="HOGENOM" id="CLU_058591_0_2_9"/>
<dbReference type="GO" id="GO:0022627">
    <property type="term" value="C:cytosolic small ribosomal subunit"/>
    <property type="evidence" value="ECO:0007669"/>
    <property type="project" value="TreeGrafter"/>
</dbReference>
<dbReference type="GO" id="GO:0003729">
    <property type="term" value="F:mRNA binding"/>
    <property type="evidence" value="ECO:0007669"/>
    <property type="project" value="UniProtKB-UniRule"/>
</dbReference>
<dbReference type="GO" id="GO:0019843">
    <property type="term" value="F:rRNA binding"/>
    <property type="evidence" value="ECO:0007669"/>
    <property type="project" value="UniProtKB-UniRule"/>
</dbReference>
<dbReference type="GO" id="GO:0003735">
    <property type="term" value="F:structural constituent of ribosome"/>
    <property type="evidence" value="ECO:0007669"/>
    <property type="project" value="InterPro"/>
</dbReference>
<dbReference type="GO" id="GO:0006412">
    <property type="term" value="P:translation"/>
    <property type="evidence" value="ECO:0007669"/>
    <property type="project" value="UniProtKB-UniRule"/>
</dbReference>
<dbReference type="CDD" id="cd02412">
    <property type="entry name" value="KH-II_30S_S3"/>
    <property type="match status" value="1"/>
</dbReference>
<dbReference type="FunFam" id="3.30.1140.32:FF:000002">
    <property type="entry name" value="30S ribosomal protein S3"/>
    <property type="match status" value="1"/>
</dbReference>
<dbReference type="FunFam" id="3.30.300.20:FF:000001">
    <property type="entry name" value="30S ribosomal protein S3"/>
    <property type="match status" value="1"/>
</dbReference>
<dbReference type="Gene3D" id="3.30.300.20">
    <property type="match status" value="1"/>
</dbReference>
<dbReference type="Gene3D" id="3.30.1140.32">
    <property type="entry name" value="Ribosomal protein S3, C-terminal domain"/>
    <property type="match status" value="1"/>
</dbReference>
<dbReference type="HAMAP" id="MF_01309_B">
    <property type="entry name" value="Ribosomal_uS3_B"/>
    <property type="match status" value="1"/>
</dbReference>
<dbReference type="InterPro" id="IPR004087">
    <property type="entry name" value="KH_dom"/>
</dbReference>
<dbReference type="InterPro" id="IPR015946">
    <property type="entry name" value="KH_dom-like_a/b"/>
</dbReference>
<dbReference type="InterPro" id="IPR004044">
    <property type="entry name" value="KH_dom_type_2"/>
</dbReference>
<dbReference type="InterPro" id="IPR009019">
    <property type="entry name" value="KH_sf_prok-type"/>
</dbReference>
<dbReference type="InterPro" id="IPR036419">
    <property type="entry name" value="Ribosomal_S3_C_sf"/>
</dbReference>
<dbReference type="InterPro" id="IPR005704">
    <property type="entry name" value="Ribosomal_uS3_bac-typ"/>
</dbReference>
<dbReference type="InterPro" id="IPR001351">
    <property type="entry name" value="Ribosomal_uS3_C"/>
</dbReference>
<dbReference type="InterPro" id="IPR018280">
    <property type="entry name" value="Ribosomal_uS3_CS"/>
</dbReference>
<dbReference type="NCBIfam" id="TIGR01009">
    <property type="entry name" value="rpsC_bact"/>
    <property type="match status" value="1"/>
</dbReference>
<dbReference type="PANTHER" id="PTHR11760">
    <property type="entry name" value="30S/40S RIBOSOMAL PROTEIN S3"/>
    <property type="match status" value="1"/>
</dbReference>
<dbReference type="PANTHER" id="PTHR11760:SF19">
    <property type="entry name" value="SMALL RIBOSOMAL SUBUNIT PROTEIN US3C"/>
    <property type="match status" value="1"/>
</dbReference>
<dbReference type="Pfam" id="PF07650">
    <property type="entry name" value="KH_2"/>
    <property type="match status" value="1"/>
</dbReference>
<dbReference type="Pfam" id="PF00189">
    <property type="entry name" value="Ribosomal_S3_C"/>
    <property type="match status" value="1"/>
</dbReference>
<dbReference type="SMART" id="SM00322">
    <property type="entry name" value="KH"/>
    <property type="match status" value="1"/>
</dbReference>
<dbReference type="SUPFAM" id="SSF54814">
    <property type="entry name" value="Prokaryotic type KH domain (KH-domain type II)"/>
    <property type="match status" value="1"/>
</dbReference>
<dbReference type="SUPFAM" id="SSF54821">
    <property type="entry name" value="Ribosomal protein S3 C-terminal domain"/>
    <property type="match status" value="1"/>
</dbReference>
<dbReference type="PROSITE" id="PS50823">
    <property type="entry name" value="KH_TYPE_2"/>
    <property type="match status" value="1"/>
</dbReference>
<dbReference type="PROSITE" id="PS00548">
    <property type="entry name" value="RIBOSOMAL_S3"/>
    <property type="match status" value="1"/>
</dbReference>
<sequence>MGQKVHPHGLRVGVIKGWDAKWYANKKDFADNLVEDNQIRKFVKKELFSAGISKIEIERAAKRVKLNIYTAKPGVVIGKGGSGIESLKKKLTNYISGKNILINIVEVKSVEAEAQLMAENIAAQLEKRISFRRAMKQTMQRAMRHGIKGVKTACSGRLGGAEIARTEHYHEGTIPLQTLRADIDYGFAEANTTYGKIGVKVWVYKGEVLPTKKVEKEEANA</sequence>
<comment type="function">
    <text evidence="1">Binds the lower part of the 30S subunit head. Binds mRNA in the 70S ribosome, positioning it for translation.</text>
</comment>
<comment type="subunit">
    <text evidence="1">Part of the 30S ribosomal subunit. Forms a tight complex with proteins S10 and S14.</text>
</comment>
<comment type="similarity">
    <text evidence="1">Belongs to the universal ribosomal protein uS3 family.</text>
</comment>
<protein>
    <recommendedName>
        <fullName evidence="1">Small ribosomal subunit protein uS3</fullName>
    </recommendedName>
    <alternativeName>
        <fullName evidence="2">30S ribosomal protein S3</fullName>
    </alternativeName>
</protein>